<comment type="function">
    <text evidence="3 6 7">ATP-dependent chromatin-remodeling factor, it slides nucleosomes along DNA; nucleosome sliding requires ATP. Acts as a transcription repressor by remodeling chromatin structure and recruiting histone H1 to target genes. Suppresses p53/TP53-mediated apoptosis by recruiting histone H1 and preventing p53/TP53 transactivation activity. Acts as a negative regulator of Wnt signaling pathway by regulating beta-catenin (CTNNB1) activity. Negatively regulates CTNNB1-targeted gene expression by being recruited specifically to the promoter regions of several CTNNB1 responsive genes. Involved in both enhancer blocking and epigenetic remodeling at chromatin boundary via its interaction with CTCF. Acts as a suppressor of STAT3 activity by suppressing the LIF-induced STAT3 transcriptional activity. Also acts as a transcription activator via its interaction with ZNF143 by participating in efficient U6 RNA polymerase III transcription. Regulates alternative splicing of a core group of genes involved in neuronal differentiation, cell cycle and DNA repair. Enables H3K36me3-coupled transcription elongation and co-transcriptional RNA processing likely via interaction with HNRNPL.</text>
</comment>
<comment type="catalytic activity">
    <reaction evidence="3">
        <text>ATP + H2O = ADP + phosphate + H(+)</text>
        <dbReference type="Rhea" id="RHEA:13065"/>
        <dbReference type="ChEBI" id="CHEBI:15377"/>
        <dbReference type="ChEBI" id="CHEBI:15378"/>
        <dbReference type="ChEBI" id="CHEBI:30616"/>
        <dbReference type="ChEBI" id="CHEBI:43474"/>
        <dbReference type="ChEBI" id="CHEBI:456216"/>
    </reaction>
</comment>
<comment type="subunit">
    <text evidence="2 3 5 7">Interacts with p53/TP53, histone H1 and CTCF. Component of some MLL1/MLL complex, at least composed of the core components KMT2A/MLL1, ASH2L, HCFC1/HCF1, WDR5 and RBBP5, as well as the facultative components BACC1, CHD8, E2F6, HSP70, INO80C, KANSL1, LAS1L, MAX, MCRS1, MGA, KAT8/MOF, PELP1, PHF20, PRP31, RING2, RUVB1/TIP49A, RUVB2/TIP49B, SENP3, TAF1, TAF4, TAF6, TAF7, TAF9 and TEX10. Interacts with CHD7. Interacts with FAM124B (By similarity). Interacts with CTNNB1 (PubMed:10921920). Interacts with PIAS3 (PubMed:16452319). Interacts with TLK2 (By similarity). Interacts with HNRNPL in an RNA-dependent manner.</text>
</comment>
<comment type="subcellular location">
    <subcellularLocation>
        <location evidence="3 5 6">Nucleus</location>
    </subcellularLocation>
    <text evidence="3">Localizes to the promoter regions of several CTNNB1-responsive genes. Also present at known CTCF target sites.</text>
</comment>
<comment type="alternative products">
    <event type="alternative splicing"/>
    <isoform>
        <id>Q9JIX5-1</id>
        <name>1</name>
        <sequence type="displayed"/>
    </isoform>
    <isoform>
        <id>Q9JIX5-2</id>
        <name>2</name>
        <sequence type="described" ref="VSP_036678 VSP_036679"/>
    </isoform>
</comment>
<comment type="PTM">
    <text evidence="3 7">Sumoylated.</text>
</comment>
<comment type="similarity">
    <text evidence="3">Belongs to the SNF2/RAD54 helicase family. CHD8 subfamily.</text>
</comment>
<protein>
    <recommendedName>
        <fullName evidence="3">Chromodomain-helicase-DNA-binding protein 8</fullName>
        <shortName evidence="3">CHD-8</shortName>
        <ecNumber evidence="3">3.6.4.-</ecNumber>
    </recommendedName>
    <alternativeName>
        <fullName evidence="3">ATP-dependent helicase CHD8</fullName>
    </alternativeName>
    <alternativeName>
        <fullName evidence="8">Axis duplication inhibitor</fullName>
        <shortName evidence="8">Duplin</shortName>
    </alternativeName>
</protein>
<name>CHD8_RAT</name>
<evidence type="ECO:0000250" key="1">
    <source>
        <dbReference type="UniProtKB" id="Q09XV5"/>
    </source>
</evidence>
<evidence type="ECO:0000250" key="2">
    <source>
        <dbReference type="UniProtKB" id="Q9HCK8"/>
    </source>
</evidence>
<evidence type="ECO:0000255" key="3">
    <source>
        <dbReference type="HAMAP-Rule" id="MF_03071"/>
    </source>
</evidence>
<evidence type="ECO:0000256" key="4">
    <source>
        <dbReference type="SAM" id="MobiDB-lite"/>
    </source>
</evidence>
<evidence type="ECO:0000269" key="5">
    <source>
    </source>
</evidence>
<evidence type="ECO:0000269" key="6">
    <source>
    </source>
</evidence>
<evidence type="ECO:0000269" key="7">
    <source>
    </source>
</evidence>
<evidence type="ECO:0000303" key="8">
    <source>
    </source>
</evidence>
<evidence type="ECO:0007744" key="9">
    <source>
    </source>
</evidence>
<organism>
    <name type="scientific">Rattus norvegicus</name>
    <name type="common">Rat</name>
    <dbReference type="NCBI Taxonomy" id="10116"/>
    <lineage>
        <taxon>Eukaryota</taxon>
        <taxon>Metazoa</taxon>
        <taxon>Chordata</taxon>
        <taxon>Craniata</taxon>
        <taxon>Vertebrata</taxon>
        <taxon>Euteleostomi</taxon>
        <taxon>Mammalia</taxon>
        <taxon>Eutheria</taxon>
        <taxon>Euarchontoglires</taxon>
        <taxon>Glires</taxon>
        <taxon>Rodentia</taxon>
        <taxon>Myomorpha</taxon>
        <taxon>Muroidea</taxon>
        <taxon>Muridae</taxon>
        <taxon>Murinae</taxon>
        <taxon>Rattus</taxon>
    </lineage>
</organism>
<accession>Q9JIX5</accession>
<proteinExistence type="evidence at protein level"/>
<feature type="chain" id="PRO_0000367311" description="Chromodomain-helicase-DNA-binding protein 8">
    <location>
        <begin position="1"/>
        <end position="2581"/>
    </location>
</feature>
<feature type="domain" description="Chromo 1" evidence="3">
    <location>
        <begin position="642"/>
        <end position="709"/>
    </location>
</feature>
<feature type="domain" description="Chromo 2" evidence="3">
    <location>
        <begin position="724"/>
        <end position="790"/>
    </location>
</feature>
<feature type="domain" description="Helicase ATP-binding" evidence="3">
    <location>
        <begin position="823"/>
        <end position="997"/>
    </location>
</feature>
<feature type="domain" description="Helicase C-terminal" evidence="3">
    <location>
        <begin position="1137"/>
        <end position="1288"/>
    </location>
</feature>
<feature type="region of interest" description="Disordered" evidence="4">
    <location>
        <begin position="22"/>
        <end position="114"/>
    </location>
</feature>
<feature type="region of interest" description="Disordered" evidence="4">
    <location>
        <begin position="253"/>
        <end position="281"/>
    </location>
</feature>
<feature type="region of interest" description="Disordered" evidence="4">
    <location>
        <begin position="349"/>
        <end position="375"/>
    </location>
</feature>
<feature type="region of interest" description="Disordered" evidence="4">
    <location>
        <begin position="473"/>
        <end position="584"/>
    </location>
</feature>
<feature type="region of interest" description="Disordered" evidence="4">
    <location>
        <begin position="596"/>
        <end position="616"/>
    </location>
</feature>
<feature type="region of interest" description="Disordered" evidence="4">
    <location>
        <begin position="1692"/>
        <end position="1713"/>
    </location>
</feature>
<feature type="region of interest" description="Interaction with FAM124B" evidence="3">
    <location>
        <begin position="1789"/>
        <end position="2302"/>
    </location>
</feature>
<feature type="region of interest" description="Disordered" evidence="4">
    <location>
        <begin position="1988"/>
        <end position="2016"/>
    </location>
</feature>
<feature type="region of interest" description="Disordered" evidence="4">
    <location>
        <begin position="2047"/>
        <end position="2118"/>
    </location>
</feature>
<feature type="region of interest" description="Disordered" evidence="4">
    <location>
        <begin position="2179"/>
        <end position="2221"/>
    </location>
</feature>
<feature type="region of interest" description="Disordered" evidence="4">
    <location>
        <begin position="2484"/>
        <end position="2581"/>
    </location>
</feature>
<feature type="short sequence motif" description="DEAH box" evidence="3">
    <location>
        <begin position="948"/>
        <end position="951"/>
    </location>
</feature>
<feature type="compositionally biased region" description="Polar residues" evidence="4">
    <location>
        <begin position="42"/>
        <end position="64"/>
    </location>
</feature>
<feature type="compositionally biased region" description="Polar residues" evidence="4">
    <location>
        <begin position="94"/>
        <end position="114"/>
    </location>
</feature>
<feature type="compositionally biased region" description="Low complexity" evidence="4">
    <location>
        <begin position="255"/>
        <end position="267"/>
    </location>
</feature>
<feature type="compositionally biased region" description="Pro residues" evidence="4">
    <location>
        <begin position="355"/>
        <end position="370"/>
    </location>
</feature>
<feature type="compositionally biased region" description="Basic and acidic residues" evidence="4">
    <location>
        <begin position="493"/>
        <end position="516"/>
    </location>
</feature>
<feature type="compositionally biased region" description="Basic residues" evidence="4">
    <location>
        <begin position="572"/>
        <end position="584"/>
    </location>
</feature>
<feature type="compositionally biased region" description="Acidic residues" evidence="4">
    <location>
        <begin position="2063"/>
        <end position="2072"/>
    </location>
</feature>
<feature type="compositionally biased region" description="Low complexity" evidence="4">
    <location>
        <begin position="2075"/>
        <end position="2094"/>
    </location>
</feature>
<feature type="compositionally biased region" description="Basic and acidic residues" evidence="4">
    <location>
        <begin position="2102"/>
        <end position="2116"/>
    </location>
</feature>
<feature type="compositionally biased region" description="Basic residues" evidence="4">
    <location>
        <begin position="2492"/>
        <end position="2510"/>
    </location>
</feature>
<feature type="compositionally biased region" description="Low complexity" evidence="4">
    <location>
        <begin position="2513"/>
        <end position="2528"/>
    </location>
</feature>
<feature type="compositionally biased region" description="Acidic residues" evidence="4">
    <location>
        <begin position="2537"/>
        <end position="2550"/>
    </location>
</feature>
<feature type="compositionally biased region" description="Low complexity" evidence="4">
    <location>
        <begin position="2565"/>
        <end position="2574"/>
    </location>
</feature>
<feature type="binding site" evidence="3">
    <location>
        <begin position="836"/>
        <end position="843"/>
    </location>
    <ligand>
        <name>ATP</name>
        <dbReference type="ChEBI" id="CHEBI:30616"/>
    </ligand>
</feature>
<feature type="modified residue" description="Phosphoserine" evidence="2">
    <location>
        <position position="432"/>
    </location>
</feature>
<feature type="modified residue" description="Phosphoserine" evidence="2">
    <location>
        <position position="553"/>
    </location>
</feature>
<feature type="modified residue" description="Phosphoserine" evidence="2">
    <location>
        <position position="562"/>
    </location>
</feature>
<feature type="modified residue" description="Phosphoserine" evidence="9">
    <location>
        <position position="1420"/>
    </location>
</feature>
<feature type="modified residue" description="Phosphoserine" evidence="9">
    <location>
        <position position="1424"/>
    </location>
</feature>
<feature type="modified residue" description="Phosphoserine" evidence="2">
    <location>
        <position position="1976"/>
    </location>
</feature>
<feature type="modified residue" description="Phosphoserine" evidence="2">
    <location>
        <position position="1978"/>
    </location>
</feature>
<feature type="modified residue" description="Phosphothreonine" evidence="2">
    <location>
        <position position="1993"/>
    </location>
</feature>
<feature type="modified residue" description="Phosphoserine" evidence="9">
    <location>
        <position position="1995"/>
    </location>
</feature>
<feature type="modified residue" description="Phosphoserine" evidence="9">
    <location>
        <position position="1997"/>
    </location>
</feature>
<feature type="modified residue" description="Phosphoserine" evidence="2">
    <location>
        <position position="2008"/>
    </location>
</feature>
<feature type="modified residue" description="Phosphoserine" evidence="9">
    <location>
        <position position="2068"/>
    </location>
</feature>
<feature type="modified residue" description="Phosphoserine" evidence="9">
    <location>
        <position position="2070"/>
    </location>
</feature>
<feature type="modified residue" description="Phosphoserine" evidence="2">
    <location>
        <position position="2182"/>
    </location>
</feature>
<feature type="modified residue" description="Phosphoserine" evidence="2">
    <location>
        <position position="2200"/>
    </location>
</feature>
<feature type="modified residue" description="Phosphoserine" evidence="1">
    <location>
        <position position="2202"/>
    </location>
</feature>
<feature type="modified residue" description="Phosphothreonine" evidence="1">
    <location>
        <position position="2204"/>
    </location>
</feature>
<feature type="modified residue" description="Phosphoserine" evidence="2">
    <location>
        <position position="2211"/>
    </location>
</feature>
<feature type="modified residue" description="Phosphothreonine" evidence="1">
    <location>
        <position position="2215"/>
    </location>
</feature>
<feature type="modified residue" description="Phosphoserine" evidence="9">
    <location>
        <position position="2223"/>
    </location>
</feature>
<feature type="modified residue" description="Phosphoserine" evidence="2">
    <location>
        <position position="2519"/>
    </location>
</feature>
<feature type="cross-link" description="Glycyl lysine isopeptide (Lys-Gly) (interchain with G-Cter in SUMO)" evidence="3">
    <location>
        <position position="609"/>
    </location>
</feature>
<feature type="cross-link" description="Glycyl lysine isopeptide (Lys-Gly) (interchain with G-Cter in SUMO2)" evidence="2">
    <location>
        <position position="2025"/>
    </location>
</feature>
<feature type="cross-link" description="Glycyl lysine isopeptide (Lys-Gly) (interchain with G-Cter in SUMO2)" evidence="2">
    <location>
        <position position="2256"/>
    </location>
</feature>
<feature type="splice variant" id="VSP_036678" description="In isoform 2." evidence="8">
    <original>PVIYYLV</original>
    <variation>VSWAQRV</variation>
    <location>
        <begin position="743"/>
        <end position="749"/>
    </location>
</feature>
<feature type="splice variant" id="VSP_036679" description="In isoform 2." evidence="8">
    <location>
        <begin position="750"/>
        <end position="2581"/>
    </location>
</feature>
<feature type="mutagenesis site" description="Does not affect sumoylation status." evidence="7">
    <original>K</original>
    <variation>R</variation>
    <location>
        <position position="457"/>
    </location>
</feature>
<feature type="mutagenesis site" description="Does not affect sumoylation status." evidence="7">
    <original>K</original>
    <variation>R</variation>
    <location>
        <position position="512"/>
    </location>
</feature>
<feature type="mutagenesis site" description="Induces a decrease in sumoylation status." evidence="7">
    <original>K</original>
    <variation>R</variation>
    <location>
        <position position="609"/>
    </location>
</feature>
<feature type="mutagenesis site" description="Does not affect sumoylation status." evidence="7">
    <original>K</original>
    <variation>R</variation>
    <location>
        <position position="654"/>
    </location>
</feature>
<gene>
    <name evidence="3" type="primary">Chd8</name>
</gene>
<sequence length="2581" mass="290692">MADPIMDLFDDPNLFGLDSLTDDSFNQVTQDPIEEALGLPSSLDSLDQMNQDGGSGDVGNSSASDLVPPPEETASTELPKESTAPAPESLTLHDYTTQPTSQEQPAQPVLQTSTPTSGLLQVSKSQEILSQGNPFMGVSATAVSPSNTGGQPSQSAPKIVILKAPPNSSVTGAHVAQIQAQGITSTAQPLVAGTANGGKVTFTKVLTGTPLRPGVSIVSGNTVLATKVPGNQAAVQRIVQPSRPVKQLVLQPVKGSAPAGNPGATGPPLKPAVTLTSTPAQGESKRITLVLQQPQSGGPQGHRHVVLGSLPGKIVLQGNQLAALTQAKSAQGQPAKVVTIQLQVQQPQQKIQIVPQPPSSQPQPQPPPSAQPLTLSSVQQAQIMGPGQNPGQRLSVPLKMVLQPQAGSSQGASSGLSVVKVLSASEVAALSSPASCAPHTAGKTGMEENRRLEHQKKQEKANRIVAEAIARARARGEQNIPRVLNEDELPSVRPEEEGEKKRRKKSSGERLKEEKPKKSKTAAASKTKGKSKLNTITPVVGKKRKRNTSSDNSDVEVMPAQSPREDEESSIQKRRSNRQVKRKKYTEDLDIKITDDEEEEEVDVTGPIKPEPILPEPVPEPDGETLPSMQFFVENPSEEDAAIVDKVLSMRVVKKELPSGQYTEAEEFFVKYKNYSYLHCEWATISQLEKDKRIHQKLKRFKTKMAQMRHFFHEDEEPFNPDYVEVDRILDESHSVDKDNGEPVIYYLVKWCSLPYEDSTWELKEDVDEGKIREFKRIQSRHPELKRVNRPQANAWKKLELSHEYKNRNQLREYQLEGVNWLLFNWYNRQNCILADEMGLGKTIQSIAFLQEVYNVGIHGPFLVIAPLSTITNWEREFNTWTEMNTIVYHGSLASRQMIQQYEMYCKDSRGRLIPGAYKFDALITTFEMILSDCPELREIEWRCVIIDEAHRLKNRNCKLLDSLKHMDLEHKVLLTGTPLQNTVEELFSLLHFLEPSQFPSESEFLKDFGDLKTEEQVQKLQAILKPMMLRRLKEDVEKNLAPKQETIIEVELTNIQKKYYRAILEKNFSFLSKGAGHTNMPNLLNTMMELRKCCNHPYLINGAEEKILMEFREACHIIPQDFHLQAMVRSAGKLVLIDKLLPKLKAGGHKVLIFSQMVRCLDILEDYLIQRRYLYERIDGRVRGNLRQAAIDRFSKPDSDRFVFLLCTRAGGLGINLTAADTCIIFDSDWNPQNDLQAQARCHRIGQSKAVKVYRLITRNSYEREMFDKASLKLGLDKAVLQSMSGRDGNITGIQQFSKKEIEDLLRKGAYAAIMEEDDEGSKFCEEDIDQILLRRTTTITIESEGKGSTFAKASFVASENRTDISLDDPNFWQKWAKKADLDMDLLNSKNNLVIDTPRVRKQTRHFSTLKDDDLVEFSDLESEDDERPRSRRHDRHHTYGRTDCFRVEKHLLVYGWGRWRDILSHGRFKRRMTERDVETICRAILVYCLLHYRGDENIKSFIWDLISPAENGKTKELQNHSGLSIPVPRGRKGKKVKSQSTFDIHKADWIRKYNPDTLFQDESYKKHLKHQCNKVLLRVRMLYYLRQEVIGDQAEKVLGGAIASEIDIWFPVVDQLEVPTTWWDSEADKSLLIGVFKHGYEKYNTMRADPALCFLEKAGRPDDKAIAAEHRVLDNFSDLVEGIDFDKDCEDPEYKPLQGPPKDPDDEGDPLMMMDEEISVIDGDEAPVTQQPGHLFWPPGSALTARLRRLVTAYQRSYKREQMKIEAAERGDRRRRRCEAAFKLKEIARREKQQRWTRREQTDFYRVVSTFGVEYDPDNMQFHWDRFRTFARLDKKTDESLTKYFHGFVAMCRQVCRLPPAAGDEPPDPNLFIEPITEERASRTLYRIELLRRLREQVLCHPLLEDRLALCQPPGLELPKWWEPVRHDGELLRGAARHGVSQTDCNIMQDPDFSFLAARMNYMQNHQAGASAASLSRCSTPLLHQQCTSRTASPSPLRPDVPAEKSPEENAVQVPSLDSLTLKLEDEVVARSRLTPQDYEIRVASSDTAPLSRSVPPVKLEDDDDSDSELDLSKLSPSSSSSSSSSSSSSSSDESEDEKEEKLTADRSRPKLYDEESLLSLTMSQDGFPNEDGEQMTPELLLLQERQRASEWPKDRVLINRIDLVCQAVLSGKWPSNRRSQEMTTGGILGPGNHLLDSPSLTPGEYGDSPVPTPRSSSAASMVEEEASAVTTAAAQFTKLRRGMDEKEFTVQIKDEEGLKLTFQKHRLMANGVMGDGHPLFHKKKGNRKKLVELEVECMEEPNHLDVDLETRIPVINKVDGTLLVGDEAPRRAELDMWLQGHPEFAVDPRFLAYMEERRKQKWQRCKKNNKTELNCLGMEPVQPANSRNGKKGHYAETAFNRVLPGPIAPENSKKRVRRTRPDLSKMMALMQGGSTGSLSLHNTFQHSSSNLQSVSSLGHSSATSASLPFMPFVMGGAAAPPHVDSSTMLHHHHHHPHPHHHHHHHPGLRTTGYPSSPATTTSGTALRLPTLQHEDDDEEEDEDDDDLSQGYDSSERDFSLIDDPMMPANSDSSDDADD</sequence>
<dbReference type="EC" id="3.6.4.-" evidence="3"/>
<dbReference type="EMBL" id="AF169825">
    <property type="protein sequence ID" value="AAF89678.1"/>
    <property type="molecule type" value="mRNA"/>
</dbReference>
<dbReference type="EMBL" id="CH474040">
    <property type="protein sequence ID" value="EDL88472.1"/>
    <property type="molecule type" value="Genomic_DNA"/>
</dbReference>
<dbReference type="RefSeq" id="NP_001334590.1">
    <molecule id="Q9JIX5-1"/>
    <property type="nucleotide sequence ID" value="NM_001347661.1"/>
</dbReference>
<dbReference type="RefSeq" id="XP_006251973.1">
    <property type="nucleotide sequence ID" value="XM_006251911.3"/>
</dbReference>
<dbReference type="RefSeq" id="XP_063130687.1">
    <molecule id="Q9JIX5-1"/>
    <property type="nucleotide sequence ID" value="XM_063274617.1"/>
</dbReference>
<dbReference type="SMR" id="Q9JIX5"/>
<dbReference type="FunCoup" id="Q9JIX5">
    <property type="interactions" value="4753"/>
</dbReference>
<dbReference type="STRING" id="10116.ENSRNOP00000071948"/>
<dbReference type="GlyGen" id="Q9JIX5">
    <property type="glycosylation" value="1 site"/>
</dbReference>
<dbReference type="iPTMnet" id="Q9JIX5"/>
<dbReference type="PhosphoSitePlus" id="Q9JIX5"/>
<dbReference type="PaxDb" id="10116-ENSRNOP00000022593"/>
<dbReference type="Ensembl" id="ENSRNOT00000096813.1">
    <molecule id="Q9JIX5-2"/>
    <property type="protein sequence ID" value="ENSRNOP00000096922.1"/>
    <property type="gene ID" value="ENSRNOG00000025011.6"/>
</dbReference>
<dbReference type="GeneID" id="65027"/>
<dbReference type="KEGG" id="rno:65027"/>
<dbReference type="UCSC" id="RGD:620696">
    <molecule id="Q9JIX5-1"/>
    <property type="organism name" value="rat"/>
</dbReference>
<dbReference type="AGR" id="RGD:620696"/>
<dbReference type="CTD" id="57680"/>
<dbReference type="RGD" id="620696">
    <property type="gene designation" value="Chd8"/>
</dbReference>
<dbReference type="VEuPathDB" id="HostDB:ENSRNOG00000025011"/>
<dbReference type="eggNOG" id="KOG0384">
    <property type="taxonomic scope" value="Eukaryota"/>
</dbReference>
<dbReference type="GeneTree" id="ENSGT00940000153649"/>
<dbReference type="HOGENOM" id="CLU_000315_5_2_1"/>
<dbReference type="InParanoid" id="Q9JIX5"/>
<dbReference type="PhylomeDB" id="Q9JIX5"/>
<dbReference type="TreeFam" id="TF313572"/>
<dbReference type="Reactome" id="R-RNO-3769402">
    <property type="pathway name" value="Deactivation of the beta-catenin transactivating complex"/>
</dbReference>
<dbReference type="PRO" id="PR:Q9JIX5"/>
<dbReference type="Proteomes" id="UP000002494">
    <property type="component" value="Chromosome 15"/>
</dbReference>
<dbReference type="Proteomes" id="UP000234681">
    <property type="component" value="Chromosome 15"/>
</dbReference>
<dbReference type="Bgee" id="ENSRNOG00000025011">
    <property type="expression patterns" value="Expressed in spleen and 19 other cell types or tissues"/>
</dbReference>
<dbReference type="GO" id="GO:0000785">
    <property type="term" value="C:chromatin"/>
    <property type="evidence" value="ECO:0000318"/>
    <property type="project" value="GO_Central"/>
</dbReference>
<dbReference type="GO" id="GO:0071339">
    <property type="term" value="C:MLL1 complex"/>
    <property type="evidence" value="ECO:0000250"/>
    <property type="project" value="UniProtKB"/>
</dbReference>
<dbReference type="GO" id="GO:0005634">
    <property type="term" value="C:nucleus"/>
    <property type="evidence" value="ECO:0000314"/>
    <property type="project" value="UniProtKB"/>
</dbReference>
<dbReference type="GO" id="GO:0032991">
    <property type="term" value="C:protein-containing complex"/>
    <property type="evidence" value="ECO:0000314"/>
    <property type="project" value="UniProtKB"/>
</dbReference>
<dbReference type="GO" id="GO:0070016">
    <property type="term" value="F:armadillo repeat domain binding"/>
    <property type="evidence" value="ECO:0000353"/>
    <property type="project" value="RGD"/>
</dbReference>
<dbReference type="GO" id="GO:0005524">
    <property type="term" value="F:ATP binding"/>
    <property type="evidence" value="ECO:0000250"/>
    <property type="project" value="UniProtKB"/>
</dbReference>
<dbReference type="GO" id="GO:0016887">
    <property type="term" value="F:ATP hydrolysis activity"/>
    <property type="evidence" value="ECO:0000318"/>
    <property type="project" value="GO_Central"/>
</dbReference>
<dbReference type="GO" id="GO:0140658">
    <property type="term" value="F:ATP-dependent chromatin remodeler activity"/>
    <property type="evidence" value="ECO:0000250"/>
    <property type="project" value="UniProtKB"/>
</dbReference>
<dbReference type="GO" id="GO:0008013">
    <property type="term" value="F:beta-catenin binding"/>
    <property type="evidence" value="ECO:0000314"/>
    <property type="project" value="UniProtKB"/>
</dbReference>
<dbReference type="GO" id="GO:0003682">
    <property type="term" value="F:chromatin binding"/>
    <property type="evidence" value="ECO:0000266"/>
    <property type="project" value="RGD"/>
</dbReference>
<dbReference type="GO" id="GO:0003677">
    <property type="term" value="F:DNA binding"/>
    <property type="evidence" value="ECO:0000250"/>
    <property type="project" value="UniProtKB"/>
</dbReference>
<dbReference type="GO" id="GO:0003678">
    <property type="term" value="F:DNA helicase activity"/>
    <property type="evidence" value="ECO:0007669"/>
    <property type="project" value="UniProtKB-UniRule"/>
</dbReference>
<dbReference type="GO" id="GO:0042393">
    <property type="term" value="F:histone binding"/>
    <property type="evidence" value="ECO:0000250"/>
    <property type="project" value="UniProtKB"/>
</dbReference>
<dbReference type="GO" id="GO:0140002">
    <property type="term" value="F:histone H3K4me3 reader activity"/>
    <property type="evidence" value="ECO:0000250"/>
    <property type="project" value="UniProtKB"/>
</dbReference>
<dbReference type="GO" id="GO:0035064">
    <property type="term" value="F:methylated histone binding"/>
    <property type="evidence" value="ECO:0000266"/>
    <property type="project" value="RGD"/>
</dbReference>
<dbReference type="GO" id="GO:0002039">
    <property type="term" value="F:p53 binding"/>
    <property type="evidence" value="ECO:0000250"/>
    <property type="project" value="UniProtKB"/>
</dbReference>
<dbReference type="GO" id="GO:0007420">
    <property type="term" value="P:brain development"/>
    <property type="evidence" value="ECO:0000266"/>
    <property type="project" value="RGD"/>
</dbReference>
<dbReference type="GO" id="GO:0006338">
    <property type="term" value="P:chromatin remodeling"/>
    <property type="evidence" value="ECO:0000250"/>
    <property type="project" value="UniProtKB"/>
</dbReference>
<dbReference type="GO" id="GO:0048565">
    <property type="term" value="P:digestive tract development"/>
    <property type="evidence" value="ECO:0000266"/>
    <property type="project" value="RGD"/>
</dbReference>
<dbReference type="GO" id="GO:0001701">
    <property type="term" value="P:in utero embryonic development"/>
    <property type="evidence" value="ECO:0000266"/>
    <property type="project" value="RGD"/>
</dbReference>
<dbReference type="GO" id="GO:0006397">
    <property type="term" value="P:mRNA processing"/>
    <property type="evidence" value="ECO:0000266"/>
    <property type="project" value="RGD"/>
</dbReference>
<dbReference type="GO" id="GO:0043066">
    <property type="term" value="P:negative regulation of apoptotic process"/>
    <property type="evidence" value="ECO:0000250"/>
    <property type="project" value="UniProtKB"/>
</dbReference>
<dbReference type="GO" id="GO:0090090">
    <property type="term" value="P:negative regulation of canonical Wnt signaling pathway"/>
    <property type="evidence" value="ECO:0000314"/>
    <property type="project" value="UniProtKB"/>
</dbReference>
<dbReference type="GO" id="GO:0045892">
    <property type="term" value="P:negative regulation of DNA-templated transcription"/>
    <property type="evidence" value="ECO:0000314"/>
    <property type="project" value="UniProtKB"/>
</dbReference>
<dbReference type="GO" id="GO:2000270">
    <property type="term" value="P:negative regulation of fibroblast apoptotic process"/>
    <property type="evidence" value="ECO:0000266"/>
    <property type="project" value="RGD"/>
</dbReference>
<dbReference type="GO" id="GO:0000122">
    <property type="term" value="P:negative regulation of transcription by RNA polymerase II"/>
    <property type="evidence" value="ECO:0000266"/>
    <property type="project" value="RGD"/>
</dbReference>
<dbReference type="GO" id="GO:0030178">
    <property type="term" value="P:negative regulation of Wnt signaling pathway"/>
    <property type="evidence" value="ECO:0000314"/>
    <property type="project" value="UniProtKB"/>
</dbReference>
<dbReference type="GO" id="GO:0045893">
    <property type="term" value="P:positive regulation of DNA-templated transcription"/>
    <property type="evidence" value="ECO:0000250"/>
    <property type="project" value="UniProtKB"/>
</dbReference>
<dbReference type="GO" id="GO:0045944">
    <property type="term" value="P:positive regulation of transcription by RNA polymerase II"/>
    <property type="evidence" value="ECO:0000250"/>
    <property type="project" value="UniProtKB"/>
</dbReference>
<dbReference type="GO" id="GO:0045945">
    <property type="term" value="P:positive regulation of transcription by RNA polymerase III"/>
    <property type="evidence" value="ECO:0000250"/>
    <property type="project" value="UniProtKB"/>
</dbReference>
<dbReference type="GO" id="GO:0060134">
    <property type="term" value="P:prepulse inhibition"/>
    <property type="evidence" value="ECO:0000266"/>
    <property type="project" value="RGD"/>
</dbReference>
<dbReference type="GO" id="GO:0035176">
    <property type="term" value="P:social behavior"/>
    <property type="evidence" value="ECO:0000266"/>
    <property type="project" value="RGD"/>
</dbReference>
<dbReference type="GO" id="GO:0001964">
    <property type="term" value="P:startle response"/>
    <property type="evidence" value="ECO:0000266"/>
    <property type="project" value="RGD"/>
</dbReference>
<dbReference type="GO" id="GO:0016055">
    <property type="term" value="P:Wnt signaling pathway"/>
    <property type="evidence" value="ECO:0007669"/>
    <property type="project" value="UniProtKB-KW"/>
</dbReference>
<dbReference type="CDD" id="cd18668">
    <property type="entry name" value="CD1_tandem_CHD5-9_like"/>
    <property type="match status" value="1"/>
</dbReference>
<dbReference type="CDD" id="cd18663">
    <property type="entry name" value="CD2_tandem_CHD5-9_like"/>
    <property type="match status" value="1"/>
</dbReference>
<dbReference type="CDD" id="cd18060">
    <property type="entry name" value="DEXHc_CHD8"/>
    <property type="match status" value="1"/>
</dbReference>
<dbReference type="CDD" id="cd18793">
    <property type="entry name" value="SF2_C_SNF"/>
    <property type="match status" value="1"/>
</dbReference>
<dbReference type="FunFam" id="3.40.5.120:FF:000004">
    <property type="entry name" value="Chromodomain-helicase-DNA-binding protein 8"/>
    <property type="match status" value="1"/>
</dbReference>
<dbReference type="FunFam" id="2.40.50.40:FF:000001">
    <property type="entry name" value="chromodomain-helicase-DNA-binding protein 8 isoform X4"/>
    <property type="match status" value="1"/>
</dbReference>
<dbReference type="FunFam" id="2.40.50.40:FF:000005">
    <property type="entry name" value="chromodomain-helicase-DNA-binding protein 8 isoform X4"/>
    <property type="match status" value="1"/>
</dbReference>
<dbReference type="FunFam" id="3.40.50.10810:FF:000003">
    <property type="entry name" value="chromodomain-helicase-DNA-binding protein 8 isoform X4"/>
    <property type="match status" value="1"/>
</dbReference>
<dbReference type="FunFam" id="3.40.50.300:FF:000015">
    <property type="entry name" value="chromodomain-helicase-DNA-binding protein 9 isoform X1"/>
    <property type="match status" value="1"/>
</dbReference>
<dbReference type="Gene3D" id="2.40.50.40">
    <property type="match status" value="2"/>
</dbReference>
<dbReference type="Gene3D" id="3.40.5.120">
    <property type="match status" value="1"/>
</dbReference>
<dbReference type="Gene3D" id="1.10.10.60">
    <property type="entry name" value="Homeodomain-like"/>
    <property type="match status" value="1"/>
</dbReference>
<dbReference type="Gene3D" id="3.40.50.300">
    <property type="entry name" value="P-loop containing nucleotide triphosphate hydrolases"/>
    <property type="match status" value="1"/>
</dbReference>
<dbReference type="Gene3D" id="3.40.50.10810">
    <property type="entry name" value="Tandem AAA-ATPase domain"/>
    <property type="match status" value="1"/>
</dbReference>
<dbReference type="HAMAP" id="MF_03071">
    <property type="entry name" value="CHD8"/>
    <property type="match status" value="1"/>
</dbReference>
<dbReference type="InterPro" id="IPR006576">
    <property type="entry name" value="BRK_domain"/>
</dbReference>
<dbReference type="InterPro" id="IPR037259">
    <property type="entry name" value="BRK_sf"/>
</dbReference>
<dbReference type="InterPro" id="IPR051493">
    <property type="entry name" value="CHD"/>
</dbReference>
<dbReference type="InterPro" id="IPR034724">
    <property type="entry name" value="CHD8"/>
</dbReference>
<dbReference type="InterPro" id="IPR016197">
    <property type="entry name" value="Chromo-like_dom_sf"/>
</dbReference>
<dbReference type="InterPro" id="IPR000953">
    <property type="entry name" value="Chromo/chromo_shadow_dom"/>
</dbReference>
<dbReference type="InterPro" id="IPR023780">
    <property type="entry name" value="Chromo_domain"/>
</dbReference>
<dbReference type="InterPro" id="IPR014001">
    <property type="entry name" value="Helicase_ATP-bd"/>
</dbReference>
<dbReference type="InterPro" id="IPR001650">
    <property type="entry name" value="Helicase_C-like"/>
</dbReference>
<dbReference type="InterPro" id="IPR056342">
    <property type="entry name" value="HTH_CHD6-9"/>
</dbReference>
<dbReference type="InterPro" id="IPR027417">
    <property type="entry name" value="P-loop_NTPase"/>
</dbReference>
<dbReference type="InterPro" id="IPR038718">
    <property type="entry name" value="SNF2-like_sf"/>
</dbReference>
<dbReference type="InterPro" id="IPR049730">
    <property type="entry name" value="SNF2/RAD54-like_C"/>
</dbReference>
<dbReference type="InterPro" id="IPR000330">
    <property type="entry name" value="SNF2_N"/>
</dbReference>
<dbReference type="PANTHER" id="PTHR46850">
    <property type="entry name" value="CHROMODOMAIN-HELICASE-DNA-BINDING PROTEIN 9"/>
    <property type="match status" value="1"/>
</dbReference>
<dbReference type="PANTHER" id="PTHR46850:SF1">
    <property type="entry name" value="CHROMODOMAIN-HELICASE-DNA-BINDING PROTEIN 9"/>
    <property type="match status" value="1"/>
</dbReference>
<dbReference type="Pfam" id="PF07533">
    <property type="entry name" value="BRK"/>
    <property type="match status" value="1"/>
</dbReference>
<dbReference type="Pfam" id="PF00385">
    <property type="entry name" value="Chromo"/>
    <property type="match status" value="2"/>
</dbReference>
<dbReference type="Pfam" id="PF00271">
    <property type="entry name" value="Helicase_C"/>
    <property type="match status" value="1"/>
</dbReference>
<dbReference type="Pfam" id="PF23078">
    <property type="entry name" value="HTH_CHD6-9"/>
    <property type="match status" value="1"/>
</dbReference>
<dbReference type="Pfam" id="PF00176">
    <property type="entry name" value="SNF2-rel_dom"/>
    <property type="match status" value="1"/>
</dbReference>
<dbReference type="SMART" id="SM00592">
    <property type="entry name" value="BRK"/>
    <property type="match status" value="2"/>
</dbReference>
<dbReference type="SMART" id="SM00298">
    <property type="entry name" value="CHROMO"/>
    <property type="match status" value="2"/>
</dbReference>
<dbReference type="SMART" id="SM00487">
    <property type="entry name" value="DEXDc"/>
    <property type="match status" value="1"/>
</dbReference>
<dbReference type="SMART" id="SM00490">
    <property type="entry name" value="HELICc"/>
    <property type="match status" value="1"/>
</dbReference>
<dbReference type="SUPFAM" id="SSF160481">
    <property type="entry name" value="BRK domain-like"/>
    <property type="match status" value="1"/>
</dbReference>
<dbReference type="SUPFAM" id="SSF54160">
    <property type="entry name" value="Chromo domain-like"/>
    <property type="match status" value="2"/>
</dbReference>
<dbReference type="SUPFAM" id="SSF52540">
    <property type="entry name" value="P-loop containing nucleoside triphosphate hydrolases"/>
    <property type="match status" value="2"/>
</dbReference>
<dbReference type="PROSITE" id="PS50013">
    <property type="entry name" value="CHROMO_2"/>
    <property type="match status" value="1"/>
</dbReference>
<dbReference type="PROSITE" id="PS51192">
    <property type="entry name" value="HELICASE_ATP_BIND_1"/>
    <property type="match status" value="1"/>
</dbReference>
<dbReference type="PROSITE" id="PS51194">
    <property type="entry name" value="HELICASE_CTER"/>
    <property type="match status" value="1"/>
</dbReference>
<keyword id="KW-0010">Activator</keyword>
<keyword id="KW-0025">Alternative splicing</keyword>
<keyword id="KW-0067">ATP-binding</keyword>
<keyword id="KW-0156">Chromatin regulator</keyword>
<keyword id="KW-0238">DNA-binding</keyword>
<keyword id="KW-0378">Hydrolase</keyword>
<keyword id="KW-1017">Isopeptide bond</keyword>
<keyword id="KW-0547">Nucleotide-binding</keyword>
<keyword id="KW-0539">Nucleus</keyword>
<keyword id="KW-0597">Phosphoprotein</keyword>
<keyword id="KW-1185">Reference proteome</keyword>
<keyword id="KW-0677">Repeat</keyword>
<keyword id="KW-0678">Repressor</keyword>
<keyword id="KW-0804">Transcription</keyword>
<keyword id="KW-0805">Transcription regulation</keyword>
<keyword id="KW-0832">Ubl conjugation</keyword>
<keyword id="KW-0879">Wnt signaling pathway</keyword>
<reference key="1">
    <citation type="journal article" date="2000" name="J. Biol. Chem.">
        <title>A novel beta-catenin-binding protein inhibits beta-catenin-dependent Tcf activation and axis formation.</title>
        <authorList>
            <person name="Sakamoto I."/>
            <person name="Kishida S."/>
            <person name="Fukui A."/>
            <person name="Kishida M."/>
            <person name="Yamamoto H."/>
            <person name="Hino S."/>
            <person name="Michiue T."/>
            <person name="Takada S."/>
            <person name="Asashima M."/>
            <person name="Kikuchi A."/>
        </authorList>
    </citation>
    <scope>NUCLEOTIDE SEQUENCE [MRNA] (ISOFORM 2)</scope>
    <scope>SUBCELLULAR LOCATION</scope>
    <scope>INTERACTION WITH CTNNB1</scope>
</reference>
<reference key="2">
    <citation type="submission" date="2005-08" db="EMBL/GenBank/DDBJ databases">
        <authorList>
            <person name="Mural R.J."/>
            <person name="Adams M.D."/>
            <person name="Myers E.W."/>
            <person name="Smith H.O."/>
            <person name="Venter J.C."/>
        </authorList>
    </citation>
    <scope>NUCLEOTIDE SEQUENCE [LARGE SCALE GENOMIC DNA]</scope>
</reference>
<reference key="3">
    <citation type="journal article" date="2002" name="J. Biol. Chem.">
        <title>Nuclear localization of Duplin, a beta-catenin-binding protein, is essential for its inhibitory activity on the Wnt signaling pathway.</title>
        <authorList>
            <person name="Kobayashi M."/>
            <person name="Kishida S."/>
            <person name="Fukui A."/>
            <person name="Michiue T."/>
            <person name="Miyamoto Y."/>
            <person name="Okamoto T."/>
            <person name="Yoneda Y."/>
            <person name="Asashima M."/>
            <person name="Kikuchi A."/>
        </authorList>
    </citation>
    <scope>FUNCTION</scope>
    <scope>SUBCELLULAR LOCATION</scope>
</reference>
<reference key="4">
    <citation type="journal article" date="2006" name="J. Biochem.">
        <title>Suppression of STAT3 activity by Duplin, which is a negative regulator of the Wnt signal.</title>
        <authorList>
            <person name="Yamashina K."/>
            <person name="Yamamoto H."/>
            <person name="Chayama K."/>
            <person name="Nakajima K."/>
            <person name="Kikuchi A."/>
        </authorList>
    </citation>
    <scope>FUNCTION</scope>
    <scope>SUMOYLATION AT LYS-609</scope>
    <scope>INTERACTION WITH PIAS3</scope>
    <scope>MUTAGENESIS OF LYS-457; LYS-512; LYS-609 AND LYS-654</scope>
</reference>
<reference key="5">
    <citation type="journal article" date="2012" name="Nat. Commun.">
        <title>Quantitative maps of protein phosphorylation sites across 14 different rat organs and tissues.</title>
        <authorList>
            <person name="Lundby A."/>
            <person name="Secher A."/>
            <person name="Lage K."/>
            <person name="Nordsborg N.B."/>
            <person name="Dmytriyev A."/>
            <person name="Lundby C."/>
            <person name="Olsen J.V."/>
        </authorList>
    </citation>
    <scope>PHOSPHORYLATION [LARGE SCALE ANALYSIS] AT SER-1420; SER-1424; SER-1995; SER-1997; SER-2068; SER-2070 AND SER-2223</scope>
    <scope>IDENTIFICATION BY MASS SPECTROMETRY [LARGE SCALE ANALYSIS]</scope>
</reference>